<protein>
    <recommendedName>
        <fullName evidence="1">Deoxyguanosinetriphosphate triphosphohydrolase</fullName>
        <shortName evidence="1">dGTP triphosphohydrolase</shortName>
        <shortName evidence="1">dGTPase</shortName>
        <ecNumber evidence="1">3.1.5.1</ecNumber>
    </recommendedName>
</protein>
<sequence>MAQIDFRKKINWHRRYRSPQGVKTEHEILRIFESDRGRIINSPAIRRLQQKTQVFPLERNAAVRTRLTHSMEVQQVGRYIAKEILSRLKELKLLEAYGLDELTGPFESIVEMSCLMHDIGNPPFGHFGEAAINDWFRQRLYPEDAESQPLTDDRCSVAALRLRDGEEPLNALRRKIRQDLCHFEGNAQGIRLVHTLMRMNLTWAQVGGILKYTRPAWWRGETPETHHYLMKKPGYYLSEEAYIARLRKELNLALYSRFPLTWIMEAADDISYCVADLEDAVEKRIFTVEQLYHHLHEAWGQHEKGSLFSLVVENAWEKSRSNSLSRSTEDQFFMYLRVNTLNKLVPYAAQRFIDNLPAIFAGTFNHALLEDASECSDLLKLYKNVAVKHVFSHPDVEQLELQGYRVISGLLEIYRPLLNLPLSDFTELVEKERVKRFPIETRLFHKLSTRHRLAYVEAVSKLPSDSPEFPLWEYYYRCRLLQDYISGMTDLYAWDEYRRLMAVEQ</sequence>
<feature type="chain" id="PRO_1000006547" description="Deoxyguanosinetriphosphate triphosphohydrolase">
    <location>
        <begin position="1"/>
        <end position="505"/>
    </location>
</feature>
<feature type="domain" description="HD" evidence="2">
    <location>
        <begin position="66"/>
        <end position="273"/>
    </location>
</feature>
<comment type="function">
    <text evidence="1">dGTPase preferentially hydrolyzes dGTP over the other canonical NTPs.</text>
</comment>
<comment type="catalytic activity">
    <reaction evidence="1">
        <text>dGTP + H2O = 2'-deoxyguanosine + triphosphate + H(+)</text>
        <dbReference type="Rhea" id="RHEA:15193"/>
        <dbReference type="ChEBI" id="CHEBI:15377"/>
        <dbReference type="ChEBI" id="CHEBI:15378"/>
        <dbReference type="ChEBI" id="CHEBI:17172"/>
        <dbReference type="ChEBI" id="CHEBI:18036"/>
        <dbReference type="ChEBI" id="CHEBI:61429"/>
        <dbReference type="EC" id="3.1.5.1"/>
    </reaction>
</comment>
<comment type="cofactor">
    <cofactor evidence="1">
        <name>Mg(2+)</name>
        <dbReference type="ChEBI" id="CHEBI:18420"/>
    </cofactor>
</comment>
<comment type="subunit">
    <text evidence="1">Homotetramer.</text>
</comment>
<comment type="similarity">
    <text evidence="1">Belongs to the dGTPase family. Type 1 subfamily.</text>
</comment>
<gene>
    <name evidence="1" type="primary">dgt</name>
    <name type="ordered locus">ECP_0170</name>
</gene>
<accession>Q0TLH1</accession>
<proteinExistence type="inferred from homology"/>
<evidence type="ECO:0000255" key="1">
    <source>
        <dbReference type="HAMAP-Rule" id="MF_00030"/>
    </source>
</evidence>
<evidence type="ECO:0000255" key="2">
    <source>
        <dbReference type="PROSITE-ProRule" id="PRU01175"/>
    </source>
</evidence>
<dbReference type="EC" id="3.1.5.1" evidence="1"/>
<dbReference type="EMBL" id="CP000247">
    <property type="protein sequence ID" value="ABG68210.1"/>
    <property type="molecule type" value="Genomic_DNA"/>
</dbReference>
<dbReference type="RefSeq" id="WP_000057086.1">
    <property type="nucleotide sequence ID" value="NC_008253.1"/>
</dbReference>
<dbReference type="SMR" id="Q0TLH1"/>
<dbReference type="KEGG" id="ecp:ECP_0170"/>
<dbReference type="HOGENOM" id="CLU_028163_2_1_6"/>
<dbReference type="Proteomes" id="UP000009182">
    <property type="component" value="Chromosome"/>
</dbReference>
<dbReference type="GO" id="GO:0008832">
    <property type="term" value="F:dGTPase activity"/>
    <property type="evidence" value="ECO:0007669"/>
    <property type="project" value="UniProtKB-UniRule"/>
</dbReference>
<dbReference type="GO" id="GO:0000287">
    <property type="term" value="F:magnesium ion binding"/>
    <property type="evidence" value="ECO:0007669"/>
    <property type="project" value="UniProtKB-UniRule"/>
</dbReference>
<dbReference type="GO" id="GO:0006203">
    <property type="term" value="P:dGTP catabolic process"/>
    <property type="evidence" value="ECO:0007669"/>
    <property type="project" value="InterPro"/>
</dbReference>
<dbReference type="CDD" id="cd00077">
    <property type="entry name" value="HDc"/>
    <property type="match status" value="1"/>
</dbReference>
<dbReference type="FunFam" id="1.10.3210.10:FF:000009">
    <property type="entry name" value="Deoxyguanosinetriphosphate triphosphohydrolase"/>
    <property type="match status" value="1"/>
</dbReference>
<dbReference type="FunFam" id="1.10.3210.10:FF:000010">
    <property type="entry name" value="Deoxyguanosinetriphosphate triphosphohydrolase"/>
    <property type="match status" value="1"/>
</dbReference>
<dbReference type="FunFam" id="1.10.3410.10:FF:000001">
    <property type="entry name" value="Deoxyguanosinetriphosphate triphosphohydrolase"/>
    <property type="match status" value="1"/>
</dbReference>
<dbReference type="Gene3D" id="1.10.3210.10">
    <property type="entry name" value="Hypothetical protein af1432"/>
    <property type="match status" value="2"/>
</dbReference>
<dbReference type="Gene3D" id="1.10.3410.10">
    <property type="entry name" value="putative deoxyguanosinetriphosphate triphosphohydrolase like domain"/>
    <property type="match status" value="1"/>
</dbReference>
<dbReference type="HAMAP" id="MF_00030">
    <property type="entry name" value="dGTPase_type1"/>
    <property type="match status" value="1"/>
</dbReference>
<dbReference type="InterPro" id="IPR023293">
    <property type="entry name" value="dGTP_triP_hydro_central_sf"/>
</dbReference>
<dbReference type="InterPro" id="IPR006261">
    <property type="entry name" value="dGTPase"/>
</dbReference>
<dbReference type="InterPro" id="IPR050135">
    <property type="entry name" value="dGTPase-like"/>
</dbReference>
<dbReference type="InterPro" id="IPR020779">
    <property type="entry name" value="dNTPase_1"/>
</dbReference>
<dbReference type="InterPro" id="IPR003607">
    <property type="entry name" value="HD/PDEase_dom"/>
</dbReference>
<dbReference type="InterPro" id="IPR006674">
    <property type="entry name" value="HD_domain"/>
</dbReference>
<dbReference type="NCBIfam" id="TIGR01353">
    <property type="entry name" value="dGTP_triPase"/>
    <property type="match status" value="1"/>
</dbReference>
<dbReference type="NCBIfam" id="NF003429">
    <property type="entry name" value="PRK04926.1"/>
    <property type="match status" value="1"/>
</dbReference>
<dbReference type="PANTHER" id="PTHR11373:SF32">
    <property type="entry name" value="DEOXYGUANOSINETRIPHOSPHATE TRIPHOSPHOHYDROLASE"/>
    <property type="match status" value="1"/>
</dbReference>
<dbReference type="PANTHER" id="PTHR11373">
    <property type="entry name" value="DEOXYNUCLEOSIDE TRIPHOSPHATE TRIPHOSPHOHYDROLASE"/>
    <property type="match status" value="1"/>
</dbReference>
<dbReference type="Pfam" id="PF01966">
    <property type="entry name" value="HD"/>
    <property type="match status" value="1"/>
</dbReference>
<dbReference type="SMART" id="SM00471">
    <property type="entry name" value="HDc"/>
    <property type="match status" value="1"/>
</dbReference>
<dbReference type="SUPFAM" id="SSF109604">
    <property type="entry name" value="HD-domain/PDEase-like"/>
    <property type="match status" value="1"/>
</dbReference>
<dbReference type="PROSITE" id="PS51831">
    <property type="entry name" value="HD"/>
    <property type="match status" value="1"/>
</dbReference>
<keyword id="KW-0378">Hydrolase</keyword>
<keyword id="KW-0460">Magnesium</keyword>
<organism>
    <name type="scientific">Escherichia coli O6:K15:H31 (strain 536 / UPEC)</name>
    <dbReference type="NCBI Taxonomy" id="362663"/>
    <lineage>
        <taxon>Bacteria</taxon>
        <taxon>Pseudomonadati</taxon>
        <taxon>Pseudomonadota</taxon>
        <taxon>Gammaproteobacteria</taxon>
        <taxon>Enterobacterales</taxon>
        <taxon>Enterobacteriaceae</taxon>
        <taxon>Escherichia</taxon>
    </lineage>
</organism>
<name>DGTP_ECOL5</name>
<reference key="1">
    <citation type="journal article" date="2006" name="Mol. Microbiol.">
        <title>Role of pathogenicity island-associated integrases in the genome plasticity of uropathogenic Escherichia coli strain 536.</title>
        <authorList>
            <person name="Hochhut B."/>
            <person name="Wilde C."/>
            <person name="Balling G."/>
            <person name="Middendorf B."/>
            <person name="Dobrindt U."/>
            <person name="Brzuszkiewicz E."/>
            <person name="Gottschalk G."/>
            <person name="Carniel E."/>
            <person name="Hacker J."/>
        </authorList>
    </citation>
    <scope>NUCLEOTIDE SEQUENCE [LARGE SCALE GENOMIC DNA]</scope>
    <source>
        <strain>536 / UPEC</strain>
    </source>
</reference>